<sequence length="108" mass="11604">MITEKIDNISVTTKANVYFDGKCVSHGITFTDGTKKSVGVILPATLTFNTGAPEIMECVAGACEYRLAGSDSWVKSAAGEKFSVPGNAKFDIRVAEGFEAYHYICHFG</sequence>
<proteinExistence type="inferred from homology"/>
<keyword id="KW-0328">Glycosyltransferase</keyword>
<keyword id="KW-1185">Reference proteome</keyword>
<keyword id="KW-0808">Transferase</keyword>
<gene>
    <name evidence="1" type="primary">ppnP</name>
    <name type="ordered locus">Bpro_1600</name>
</gene>
<comment type="function">
    <text evidence="1">Catalyzes the phosphorolysis of diverse nucleosides, yielding D-ribose 1-phosphate and the respective free bases. Can use uridine, adenosine, guanosine, cytidine, thymidine, inosine and xanthosine as substrates. Also catalyzes the reverse reactions.</text>
</comment>
<comment type="catalytic activity">
    <reaction evidence="1">
        <text>a purine D-ribonucleoside + phosphate = a purine nucleobase + alpha-D-ribose 1-phosphate</text>
        <dbReference type="Rhea" id="RHEA:19805"/>
        <dbReference type="ChEBI" id="CHEBI:26386"/>
        <dbReference type="ChEBI" id="CHEBI:43474"/>
        <dbReference type="ChEBI" id="CHEBI:57720"/>
        <dbReference type="ChEBI" id="CHEBI:142355"/>
        <dbReference type="EC" id="2.4.2.1"/>
    </reaction>
</comment>
<comment type="catalytic activity">
    <reaction evidence="1">
        <text>adenosine + phosphate = alpha-D-ribose 1-phosphate + adenine</text>
        <dbReference type="Rhea" id="RHEA:27642"/>
        <dbReference type="ChEBI" id="CHEBI:16335"/>
        <dbReference type="ChEBI" id="CHEBI:16708"/>
        <dbReference type="ChEBI" id="CHEBI:43474"/>
        <dbReference type="ChEBI" id="CHEBI:57720"/>
        <dbReference type="EC" id="2.4.2.1"/>
    </reaction>
</comment>
<comment type="catalytic activity">
    <reaction evidence="1">
        <text>cytidine + phosphate = cytosine + alpha-D-ribose 1-phosphate</text>
        <dbReference type="Rhea" id="RHEA:52540"/>
        <dbReference type="ChEBI" id="CHEBI:16040"/>
        <dbReference type="ChEBI" id="CHEBI:17562"/>
        <dbReference type="ChEBI" id="CHEBI:43474"/>
        <dbReference type="ChEBI" id="CHEBI:57720"/>
        <dbReference type="EC" id="2.4.2.2"/>
    </reaction>
</comment>
<comment type="catalytic activity">
    <reaction evidence="1">
        <text>guanosine + phosphate = alpha-D-ribose 1-phosphate + guanine</text>
        <dbReference type="Rhea" id="RHEA:13233"/>
        <dbReference type="ChEBI" id="CHEBI:16235"/>
        <dbReference type="ChEBI" id="CHEBI:16750"/>
        <dbReference type="ChEBI" id="CHEBI:43474"/>
        <dbReference type="ChEBI" id="CHEBI:57720"/>
        <dbReference type="EC" id="2.4.2.1"/>
    </reaction>
</comment>
<comment type="catalytic activity">
    <reaction evidence="1">
        <text>inosine + phosphate = alpha-D-ribose 1-phosphate + hypoxanthine</text>
        <dbReference type="Rhea" id="RHEA:27646"/>
        <dbReference type="ChEBI" id="CHEBI:17368"/>
        <dbReference type="ChEBI" id="CHEBI:17596"/>
        <dbReference type="ChEBI" id="CHEBI:43474"/>
        <dbReference type="ChEBI" id="CHEBI:57720"/>
        <dbReference type="EC" id="2.4.2.1"/>
    </reaction>
</comment>
<comment type="catalytic activity">
    <reaction evidence="1">
        <text>thymidine + phosphate = 2-deoxy-alpha-D-ribose 1-phosphate + thymine</text>
        <dbReference type="Rhea" id="RHEA:16037"/>
        <dbReference type="ChEBI" id="CHEBI:17748"/>
        <dbReference type="ChEBI" id="CHEBI:17821"/>
        <dbReference type="ChEBI" id="CHEBI:43474"/>
        <dbReference type="ChEBI" id="CHEBI:57259"/>
        <dbReference type="EC" id="2.4.2.2"/>
    </reaction>
</comment>
<comment type="catalytic activity">
    <reaction evidence="1">
        <text>uridine + phosphate = alpha-D-ribose 1-phosphate + uracil</text>
        <dbReference type="Rhea" id="RHEA:24388"/>
        <dbReference type="ChEBI" id="CHEBI:16704"/>
        <dbReference type="ChEBI" id="CHEBI:17568"/>
        <dbReference type="ChEBI" id="CHEBI:43474"/>
        <dbReference type="ChEBI" id="CHEBI:57720"/>
        <dbReference type="EC" id="2.4.2.2"/>
    </reaction>
</comment>
<comment type="catalytic activity">
    <reaction evidence="1">
        <text>xanthosine + phosphate = alpha-D-ribose 1-phosphate + xanthine</text>
        <dbReference type="Rhea" id="RHEA:27638"/>
        <dbReference type="ChEBI" id="CHEBI:17712"/>
        <dbReference type="ChEBI" id="CHEBI:18107"/>
        <dbReference type="ChEBI" id="CHEBI:43474"/>
        <dbReference type="ChEBI" id="CHEBI:57720"/>
        <dbReference type="EC" id="2.4.2.1"/>
    </reaction>
</comment>
<comment type="similarity">
    <text evidence="1">Belongs to the nucleoside phosphorylase PpnP family.</text>
</comment>
<accession>Q12D54</accession>
<dbReference type="EC" id="2.4.2.1" evidence="1"/>
<dbReference type="EC" id="2.4.2.2" evidence="1"/>
<dbReference type="EMBL" id="CP000316">
    <property type="protein sequence ID" value="ABE43538.1"/>
    <property type="molecule type" value="Genomic_DNA"/>
</dbReference>
<dbReference type="RefSeq" id="WP_011482537.1">
    <property type="nucleotide sequence ID" value="NC_007948.1"/>
</dbReference>
<dbReference type="SMR" id="Q12D54"/>
<dbReference type="STRING" id="296591.Bpro_1600"/>
<dbReference type="KEGG" id="pol:Bpro_1600"/>
<dbReference type="eggNOG" id="COG3123">
    <property type="taxonomic scope" value="Bacteria"/>
</dbReference>
<dbReference type="HOGENOM" id="CLU_157874_1_0_4"/>
<dbReference type="OrthoDB" id="9793848at2"/>
<dbReference type="Proteomes" id="UP000001983">
    <property type="component" value="Chromosome"/>
</dbReference>
<dbReference type="GO" id="GO:0005829">
    <property type="term" value="C:cytosol"/>
    <property type="evidence" value="ECO:0007669"/>
    <property type="project" value="TreeGrafter"/>
</dbReference>
<dbReference type="GO" id="GO:0047975">
    <property type="term" value="F:guanosine phosphorylase activity"/>
    <property type="evidence" value="ECO:0007669"/>
    <property type="project" value="UniProtKB-EC"/>
</dbReference>
<dbReference type="GO" id="GO:0004731">
    <property type="term" value="F:purine-nucleoside phosphorylase activity"/>
    <property type="evidence" value="ECO:0007669"/>
    <property type="project" value="UniProtKB-UniRule"/>
</dbReference>
<dbReference type="GO" id="GO:0009032">
    <property type="term" value="F:thymidine phosphorylase activity"/>
    <property type="evidence" value="ECO:0007669"/>
    <property type="project" value="UniProtKB-EC"/>
</dbReference>
<dbReference type="GO" id="GO:0004850">
    <property type="term" value="F:uridine phosphorylase activity"/>
    <property type="evidence" value="ECO:0007669"/>
    <property type="project" value="UniProtKB-EC"/>
</dbReference>
<dbReference type="CDD" id="cd20296">
    <property type="entry name" value="cupin_PpnP-like"/>
    <property type="match status" value="1"/>
</dbReference>
<dbReference type="Gene3D" id="2.60.120.10">
    <property type="entry name" value="Jelly Rolls"/>
    <property type="match status" value="1"/>
</dbReference>
<dbReference type="HAMAP" id="MF_01537">
    <property type="entry name" value="Nucleos_phosphorylase_PpnP"/>
    <property type="match status" value="1"/>
</dbReference>
<dbReference type="InterPro" id="IPR009664">
    <property type="entry name" value="Ppnp"/>
</dbReference>
<dbReference type="InterPro" id="IPR014710">
    <property type="entry name" value="RmlC-like_jellyroll"/>
</dbReference>
<dbReference type="InterPro" id="IPR011051">
    <property type="entry name" value="RmlC_Cupin_sf"/>
</dbReference>
<dbReference type="PANTHER" id="PTHR36540">
    <property type="entry name" value="PYRIMIDINE/PURINE NUCLEOSIDE PHOSPHORYLASE"/>
    <property type="match status" value="1"/>
</dbReference>
<dbReference type="PANTHER" id="PTHR36540:SF1">
    <property type="entry name" value="PYRIMIDINE_PURINE NUCLEOSIDE PHOSPHORYLASE"/>
    <property type="match status" value="1"/>
</dbReference>
<dbReference type="Pfam" id="PF06865">
    <property type="entry name" value="Ppnp"/>
    <property type="match status" value="1"/>
</dbReference>
<dbReference type="SUPFAM" id="SSF51182">
    <property type="entry name" value="RmlC-like cupins"/>
    <property type="match status" value="1"/>
</dbReference>
<reference key="1">
    <citation type="journal article" date="2008" name="Appl. Environ. Microbiol.">
        <title>The genome of Polaromonas sp. strain JS666: insights into the evolution of a hydrocarbon- and xenobiotic-degrading bacterium, and features of relevance to biotechnology.</title>
        <authorList>
            <person name="Mattes T.E."/>
            <person name="Alexander A.K."/>
            <person name="Richardson P.M."/>
            <person name="Munk A.C."/>
            <person name="Han C.S."/>
            <person name="Stothard P."/>
            <person name="Coleman N.V."/>
        </authorList>
    </citation>
    <scope>NUCLEOTIDE SEQUENCE [LARGE SCALE GENOMIC DNA]</scope>
    <source>
        <strain>JS666 / ATCC BAA-500</strain>
    </source>
</reference>
<organism>
    <name type="scientific">Polaromonas sp. (strain JS666 / ATCC BAA-500)</name>
    <dbReference type="NCBI Taxonomy" id="296591"/>
    <lineage>
        <taxon>Bacteria</taxon>
        <taxon>Pseudomonadati</taxon>
        <taxon>Pseudomonadota</taxon>
        <taxon>Betaproteobacteria</taxon>
        <taxon>Burkholderiales</taxon>
        <taxon>Comamonadaceae</taxon>
        <taxon>Polaromonas</taxon>
    </lineage>
</organism>
<evidence type="ECO:0000255" key="1">
    <source>
        <dbReference type="HAMAP-Rule" id="MF_01537"/>
    </source>
</evidence>
<feature type="chain" id="PRO_0000298706" description="Pyrimidine/purine nucleoside phosphorylase">
    <location>
        <begin position="1"/>
        <end position="108"/>
    </location>
</feature>
<name>PPNP_POLSJ</name>
<protein>
    <recommendedName>
        <fullName evidence="1">Pyrimidine/purine nucleoside phosphorylase</fullName>
        <ecNumber evidence="1">2.4.2.1</ecNumber>
        <ecNumber evidence="1">2.4.2.2</ecNumber>
    </recommendedName>
    <alternativeName>
        <fullName evidence="1">Adenosine phosphorylase</fullName>
    </alternativeName>
    <alternativeName>
        <fullName evidence="1">Cytidine phosphorylase</fullName>
    </alternativeName>
    <alternativeName>
        <fullName evidence="1">Guanosine phosphorylase</fullName>
    </alternativeName>
    <alternativeName>
        <fullName evidence="1">Inosine phosphorylase</fullName>
    </alternativeName>
    <alternativeName>
        <fullName evidence="1">Thymidine phosphorylase</fullName>
    </alternativeName>
    <alternativeName>
        <fullName evidence="1">Uridine phosphorylase</fullName>
    </alternativeName>
    <alternativeName>
        <fullName evidence="1">Xanthosine phosphorylase</fullName>
    </alternativeName>
</protein>